<keyword id="KW-0113">Calvin cycle</keyword>
<keyword id="KW-0120">Carbon dioxide fixation</keyword>
<keyword id="KW-0456">Lyase</keyword>
<keyword id="KW-0460">Magnesium</keyword>
<keyword id="KW-0479">Metal-binding</keyword>
<keyword id="KW-0503">Monooxygenase</keyword>
<keyword id="KW-0560">Oxidoreductase</keyword>
<keyword id="KW-1185">Reference proteome</keyword>
<evidence type="ECO:0000255" key="1">
    <source>
        <dbReference type="HAMAP-Rule" id="MF_01339"/>
    </source>
</evidence>
<name>RBL2_POLNA</name>
<feature type="chain" id="PRO_1000067649" description="Ribulose bisphosphate carboxylase">
    <location>
        <begin position="1"/>
        <end position="459"/>
    </location>
</feature>
<feature type="active site" description="Proton acceptor" evidence="1">
    <location>
        <position position="166"/>
    </location>
</feature>
<feature type="active site" description="Proton acceptor" evidence="1">
    <location>
        <position position="287"/>
    </location>
</feature>
<feature type="binding site" description="in homodimeric partner" evidence="1">
    <location>
        <position position="111"/>
    </location>
    <ligand>
        <name>substrate</name>
    </ligand>
</feature>
<feature type="binding site" evidence="1">
    <location>
        <position position="168"/>
    </location>
    <ligand>
        <name>substrate</name>
    </ligand>
</feature>
<feature type="binding site" description="via carbamate group" evidence="1">
    <location>
        <position position="191"/>
    </location>
    <ligand>
        <name>Mg(2+)</name>
        <dbReference type="ChEBI" id="CHEBI:18420"/>
    </ligand>
</feature>
<feature type="binding site" evidence="1">
    <location>
        <position position="193"/>
    </location>
    <ligand>
        <name>Mg(2+)</name>
        <dbReference type="ChEBI" id="CHEBI:18420"/>
    </ligand>
</feature>
<feature type="binding site" evidence="1">
    <location>
        <position position="194"/>
    </location>
    <ligand>
        <name>Mg(2+)</name>
        <dbReference type="ChEBI" id="CHEBI:18420"/>
    </ligand>
</feature>
<feature type="binding site" evidence="1">
    <location>
        <position position="288"/>
    </location>
    <ligand>
        <name>substrate</name>
    </ligand>
</feature>
<feature type="binding site" evidence="1">
    <location>
        <position position="321"/>
    </location>
    <ligand>
        <name>substrate</name>
    </ligand>
</feature>
<feature type="binding site" evidence="1">
    <location>
        <position position="368"/>
    </location>
    <ligand>
        <name>substrate</name>
    </ligand>
</feature>
<feature type="site" description="Transition state stabilizer" evidence="1">
    <location>
        <position position="329"/>
    </location>
</feature>
<feature type="modified residue" description="N6-carboxylysine" evidence="1">
    <location>
        <position position="191"/>
    </location>
</feature>
<accession>A1VNQ9</accession>
<organism>
    <name type="scientific">Polaromonas naphthalenivorans (strain CJ2)</name>
    <dbReference type="NCBI Taxonomy" id="365044"/>
    <lineage>
        <taxon>Bacteria</taxon>
        <taxon>Pseudomonadati</taxon>
        <taxon>Pseudomonadota</taxon>
        <taxon>Betaproteobacteria</taxon>
        <taxon>Burkholderiales</taxon>
        <taxon>Comamonadaceae</taxon>
        <taxon>Polaromonas</taxon>
    </lineage>
</organism>
<dbReference type="EC" id="4.1.1.39" evidence="1"/>
<dbReference type="EMBL" id="CP000529">
    <property type="protein sequence ID" value="ABM37287.1"/>
    <property type="molecule type" value="Genomic_DNA"/>
</dbReference>
<dbReference type="RefSeq" id="WP_011801368.1">
    <property type="nucleotide sequence ID" value="NC_008781.1"/>
</dbReference>
<dbReference type="SMR" id="A1VNQ9"/>
<dbReference type="STRING" id="365044.Pnap_1978"/>
<dbReference type="KEGG" id="pna:Pnap_1978"/>
<dbReference type="eggNOG" id="COG1850">
    <property type="taxonomic scope" value="Bacteria"/>
</dbReference>
<dbReference type="HOGENOM" id="CLU_031450_3_1_4"/>
<dbReference type="OrthoDB" id="9770811at2"/>
<dbReference type="Proteomes" id="UP000000644">
    <property type="component" value="Chromosome"/>
</dbReference>
<dbReference type="GO" id="GO:0000287">
    <property type="term" value="F:magnesium ion binding"/>
    <property type="evidence" value="ECO:0007669"/>
    <property type="project" value="UniProtKB-UniRule"/>
</dbReference>
<dbReference type="GO" id="GO:0004497">
    <property type="term" value="F:monooxygenase activity"/>
    <property type="evidence" value="ECO:0007669"/>
    <property type="project" value="UniProtKB-KW"/>
</dbReference>
<dbReference type="GO" id="GO:0016984">
    <property type="term" value="F:ribulose-bisphosphate carboxylase activity"/>
    <property type="evidence" value="ECO:0007669"/>
    <property type="project" value="UniProtKB-UniRule"/>
</dbReference>
<dbReference type="GO" id="GO:0019253">
    <property type="term" value="P:reductive pentose-phosphate cycle"/>
    <property type="evidence" value="ECO:0007669"/>
    <property type="project" value="UniProtKB-KW"/>
</dbReference>
<dbReference type="CDD" id="cd08211">
    <property type="entry name" value="RuBisCO_large_II"/>
    <property type="match status" value="1"/>
</dbReference>
<dbReference type="Gene3D" id="3.20.20.110">
    <property type="entry name" value="Ribulose bisphosphate carboxylase, large subunit, C-terminal domain"/>
    <property type="match status" value="1"/>
</dbReference>
<dbReference type="Gene3D" id="3.30.70.150">
    <property type="entry name" value="RuBisCO large subunit, N-terminal domain"/>
    <property type="match status" value="1"/>
</dbReference>
<dbReference type="HAMAP" id="MF_01339">
    <property type="entry name" value="RuBisCO_L_type2"/>
    <property type="match status" value="1"/>
</dbReference>
<dbReference type="InterPro" id="IPR033966">
    <property type="entry name" value="RuBisCO"/>
</dbReference>
<dbReference type="InterPro" id="IPR020878">
    <property type="entry name" value="RuBisCo_large_chain_AS"/>
</dbReference>
<dbReference type="InterPro" id="IPR000685">
    <property type="entry name" value="RuBisCO_lsu_C"/>
</dbReference>
<dbReference type="InterPro" id="IPR036376">
    <property type="entry name" value="RuBisCO_lsu_C_sf"/>
</dbReference>
<dbReference type="InterPro" id="IPR017443">
    <property type="entry name" value="RuBisCO_lsu_fd_N"/>
</dbReference>
<dbReference type="InterPro" id="IPR036422">
    <property type="entry name" value="RuBisCO_lsu_N_sf"/>
</dbReference>
<dbReference type="InterPro" id="IPR020871">
    <property type="entry name" value="RuBisCO_lsuII"/>
</dbReference>
<dbReference type="NCBIfam" id="NF010002">
    <property type="entry name" value="PRK13475.1"/>
    <property type="match status" value="1"/>
</dbReference>
<dbReference type="PANTHER" id="PTHR42704">
    <property type="entry name" value="RIBULOSE BISPHOSPHATE CARBOXYLASE"/>
    <property type="match status" value="1"/>
</dbReference>
<dbReference type="PANTHER" id="PTHR42704:SF17">
    <property type="entry name" value="RIBULOSE BISPHOSPHATE CARBOXYLASE LARGE CHAIN"/>
    <property type="match status" value="1"/>
</dbReference>
<dbReference type="Pfam" id="PF00016">
    <property type="entry name" value="RuBisCO_large"/>
    <property type="match status" value="1"/>
</dbReference>
<dbReference type="Pfam" id="PF02788">
    <property type="entry name" value="RuBisCO_large_N"/>
    <property type="match status" value="1"/>
</dbReference>
<dbReference type="SUPFAM" id="SSF51649">
    <property type="entry name" value="RuBisCo, C-terminal domain"/>
    <property type="match status" value="1"/>
</dbReference>
<dbReference type="SUPFAM" id="SSF54966">
    <property type="entry name" value="RuBisCO, large subunit, small (N-terminal) domain"/>
    <property type="match status" value="1"/>
</dbReference>
<dbReference type="PROSITE" id="PS00157">
    <property type="entry name" value="RUBISCO_LARGE"/>
    <property type="match status" value="1"/>
</dbReference>
<proteinExistence type="inferred from homology"/>
<sequence>MDQSNRYADLSLKEEDLIAGGRHILVAYKMKPKAGHGYLEAAAHFAAESSTGTNVEVSTTDEFTKGVDALVYLIDEATEEMRIAFPMDLFDRNILDGRMMIVSFLTLVIGNNQGMGDIQHAKIYDFFMPPRAIQLFDGPSKDISDMWRILGRPVKDGGYIAGTIIKPKLGLRPEPFAQAAYQFWLGGDFIKNDEPQGNQTFAPMNKVMPLVHDAMKRAMDETGEAKLFSANITADDHYEMLARGDYILRTFGPDADKVAFLVDGYVGGPGMITTARRAFPNQYLHYHRAGHGAVTSPSAKRGYDAYVLAKMSRLQGASGIHVGTMGYGKMEGTHDDRAIAYIIERDSYTGPAYHQEWYGMKPTTPIISGGMNALRLPGFFENLGHGNVINTSGGGAYGHIDSPAAGATSLRQAYECWKAKADPIEWAKEHPEFARAFASFPGDADMLFPGWRDKLASHR</sequence>
<protein>
    <recommendedName>
        <fullName evidence="1">Ribulose bisphosphate carboxylase</fullName>
        <shortName evidence="1">RuBisCO</shortName>
        <ecNumber evidence="1">4.1.1.39</ecNumber>
    </recommendedName>
</protein>
<reference key="1">
    <citation type="journal article" date="2009" name="Environ. Microbiol.">
        <title>The genome of Polaromonas naphthalenivorans strain CJ2, isolated from coal tar-contaminated sediment, reveals physiological and metabolic versatility and evolution through extensive horizontal gene transfer.</title>
        <authorList>
            <person name="Yagi J.M."/>
            <person name="Sims D."/>
            <person name="Brettin T."/>
            <person name="Bruce D."/>
            <person name="Madsen E.L."/>
        </authorList>
    </citation>
    <scope>NUCLEOTIDE SEQUENCE [LARGE SCALE GENOMIC DNA]</scope>
    <source>
        <strain>CJ2</strain>
    </source>
</reference>
<comment type="function">
    <text evidence="1">RuBisCO catalyzes two reactions: the carboxylation of D-ribulose 1,5-bisphosphate, the primary event in carbon dioxide fixation, as well as the oxidative fragmentation of the pentose substrate. Both reactions occur simultaneously and in competition at the same active site.</text>
</comment>
<comment type="catalytic activity">
    <reaction evidence="1">
        <text>2 (2R)-3-phosphoglycerate + 2 H(+) = D-ribulose 1,5-bisphosphate + CO2 + H2O</text>
        <dbReference type="Rhea" id="RHEA:23124"/>
        <dbReference type="ChEBI" id="CHEBI:15377"/>
        <dbReference type="ChEBI" id="CHEBI:15378"/>
        <dbReference type="ChEBI" id="CHEBI:16526"/>
        <dbReference type="ChEBI" id="CHEBI:57870"/>
        <dbReference type="ChEBI" id="CHEBI:58272"/>
        <dbReference type="EC" id="4.1.1.39"/>
    </reaction>
</comment>
<comment type="catalytic activity">
    <reaction evidence="1">
        <text>D-ribulose 1,5-bisphosphate + O2 = 2-phosphoglycolate + (2R)-3-phosphoglycerate + 2 H(+)</text>
        <dbReference type="Rhea" id="RHEA:36631"/>
        <dbReference type="ChEBI" id="CHEBI:15378"/>
        <dbReference type="ChEBI" id="CHEBI:15379"/>
        <dbReference type="ChEBI" id="CHEBI:57870"/>
        <dbReference type="ChEBI" id="CHEBI:58033"/>
        <dbReference type="ChEBI" id="CHEBI:58272"/>
    </reaction>
</comment>
<comment type="cofactor">
    <cofactor evidence="1">
        <name>Mg(2+)</name>
        <dbReference type="ChEBI" id="CHEBI:18420"/>
    </cofactor>
    <text evidence="1">Binds 1 Mg(2+) ion per subunit.</text>
</comment>
<comment type="subunit">
    <text evidence="1">Homodimer.</text>
</comment>
<comment type="miscellaneous">
    <text evidence="1">The basic functional RuBisCO is composed of a large chain homodimer in a 'head-to-tail' conformation. In contrast to form I RuBisCO, the form II RuBisCO are composed solely of large subunits.</text>
</comment>
<comment type="similarity">
    <text evidence="1">Belongs to the RuBisCO large chain family. Type II subfamily.</text>
</comment>
<gene>
    <name evidence="1" type="primary">cbbM</name>
    <name type="ordered locus">Pnap_1978</name>
</gene>